<name>CBRB_SHIFL</name>
<dbReference type="EMBL" id="AE005674">
    <property type="protein sequence ID" value="AAN45188.1"/>
    <property type="molecule type" value="Genomic_DNA"/>
</dbReference>
<dbReference type="EMBL" id="AE014073">
    <property type="protein sequence ID" value="AAP19009.1"/>
    <property type="molecule type" value="Genomic_DNA"/>
</dbReference>
<dbReference type="RefSeq" id="WP_000116772.1">
    <property type="nucleotide sequence ID" value="NZ_WHSI01000072.1"/>
</dbReference>
<dbReference type="STRING" id="198214.SF3744"/>
<dbReference type="PaxDb" id="198214-SF3744"/>
<dbReference type="KEGG" id="sfl:SF3744"/>
<dbReference type="KEGG" id="sfx:S4028"/>
<dbReference type="PATRIC" id="fig|198214.7.peg.4419"/>
<dbReference type="HOGENOM" id="CLU_139024_0_0_6"/>
<dbReference type="Proteomes" id="UP000001006">
    <property type="component" value="Chromosome"/>
</dbReference>
<dbReference type="Proteomes" id="UP000002673">
    <property type="component" value="Chromosome"/>
</dbReference>
<dbReference type="GO" id="GO:0005886">
    <property type="term" value="C:plasma membrane"/>
    <property type="evidence" value="ECO:0007669"/>
    <property type="project" value="UniProtKB-SubCell"/>
</dbReference>
<dbReference type="NCBIfam" id="NF007334">
    <property type="entry name" value="PRK09823.1"/>
    <property type="match status" value="1"/>
</dbReference>
<feature type="chain" id="PRO_0000320704" description="Inner membrane protein CbrB">
    <location>
        <begin position="1"/>
        <end position="157"/>
    </location>
</feature>
<feature type="topological domain" description="Cytoplasmic" evidence="2">
    <location>
        <begin position="1"/>
        <end position="11"/>
    </location>
</feature>
<feature type="transmembrane region" description="Helical" evidence="2">
    <location>
        <begin position="12"/>
        <end position="32"/>
    </location>
</feature>
<feature type="topological domain" description="Periplasmic" evidence="2">
    <location>
        <begin position="33"/>
        <end position="36"/>
    </location>
</feature>
<feature type="transmembrane region" description="Helical" evidence="2">
    <location>
        <begin position="37"/>
        <end position="57"/>
    </location>
</feature>
<feature type="topological domain" description="Cytoplasmic" evidence="2">
    <location>
        <begin position="58"/>
        <end position="83"/>
    </location>
</feature>
<feature type="transmembrane region" description="Helical" evidence="2">
    <location>
        <begin position="84"/>
        <end position="104"/>
    </location>
</feature>
<feature type="topological domain" description="Periplasmic" evidence="2">
    <location>
        <begin position="105"/>
        <end position="115"/>
    </location>
</feature>
<feature type="transmembrane region" description="Helical" evidence="2">
    <location>
        <begin position="116"/>
        <end position="136"/>
    </location>
</feature>
<feature type="topological domain" description="Cytoplasmic" evidence="2">
    <location>
        <begin position="137"/>
        <end position="157"/>
    </location>
</feature>
<evidence type="ECO:0000250" key="1"/>
<evidence type="ECO:0000255" key="2"/>
<evidence type="ECO:0000305" key="3"/>
<proteinExistence type="inferred from homology"/>
<reference key="1">
    <citation type="journal article" date="2002" name="Nucleic Acids Res.">
        <title>Genome sequence of Shigella flexneri 2a: insights into pathogenicity through comparison with genomes of Escherichia coli K12 and O157.</title>
        <authorList>
            <person name="Jin Q."/>
            <person name="Yuan Z."/>
            <person name="Xu J."/>
            <person name="Wang Y."/>
            <person name="Shen Y."/>
            <person name="Lu W."/>
            <person name="Wang J."/>
            <person name="Liu H."/>
            <person name="Yang J."/>
            <person name="Yang F."/>
            <person name="Zhang X."/>
            <person name="Zhang J."/>
            <person name="Yang G."/>
            <person name="Wu H."/>
            <person name="Qu D."/>
            <person name="Dong J."/>
            <person name="Sun L."/>
            <person name="Xue Y."/>
            <person name="Zhao A."/>
            <person name="Gao Y."/>
            <person name="Zhu J."/>
            <person name="Kan B."/>
            <person name="Ding K."/>
            <person name="Chen S."/>
            <person name="Cheng H."/>
            <person name="Yao Z."/>
            <person name="He B."/>
            <person name="Chen R."/>
            <person name="Ma D."/>
            <person name="Qiang B."/>
            <person name="Wen Y."/>
            <person name="Hou Y."/>
            <person name="Yu J."/>
        </authorList>
    </citation>
    <scope>NUCLEOTIDE SEQUENCE [LARGE SCALE GENOMIC DNA]</scope>
    <source>
        <strain>301 / Serotype 2a</strain>
    </source>
</reference>
<reference key="2">
    <citation type="journal article" date="2003" name="Infect. Immun.">
        <title>Complete genome sequence and comparative genomics of Shigella flexneri serotype 2a strain 2457T.</title>
        <authorList>
            <person name="Wei J."/>
            <person name="Goldberg M.B."/>
            <person name="Burland V."/>
            <person name="Venkatesan M.M."/>
            <person name="Deng W."/>
            <person name="Fournier G."/>
            <person name="Mayhew G.F."/>
            <person name="Plunkett G. III"/>
            <person name="Rose D.J."/>
            <person name="Darling A."/>
            <person name="Mau B."/>
            <person name="Perna N.T."/>
            <person name="Payne S.M."/>
            <person name="Runyen-Janecky L.J."/>
            <person name="Zhou S."/>
            <person name="Schwartz D.C."/>
            <person name="Blattner F.R."/>
        </authorList>
    </citation>
    <scope>NUCLEOTIDE SEQUENCE [LARGE SCALE GENOMIC DNA]</scope>
    <source>
        <strain>ATCC 700930 / 2457T / Serotype 2a</strain>
    </source>
</reference>
<accession>Q83IZ9</accession>
<accession>Q7BZ71</accession>
<keyword id="KW-0997">Cell inner membrane</keyword>
<keyword id="KW-1003">Cell membrane</keyword>
<keyword id="KW-0472">Membrane</keyword>
<keyword id="KW-1185">Reference proteome</keyword>
<keyword id="KW-0812">Transmembrane</keyword>
<keyword id="KW-1133">Transmembrane helix</keyword>
<protein>
    <recommendedName>
        <fullName>Inner membrane protein CbrB</fullName>
    </recommendedName>
</protein>
<comment type="subcellular location">
    <subcellularLocation>
        <location evidence="1">Cell inner membrane</location>
        <topology evidence="1">Multi-pass membrane protein</topology>
    </subcellularLocation>
</comment>
<comment type="similarity">
    <text evidence="3">Belongs to the CbrB family.</text>
</comment>
<gene>
    <name type="primary">cbrB</name>
    <name type="ordered locus">SF3744</name>
    <name type="ordered locus">S4028</name>
</gene>
<organism>
    <name type="scientific">Shigella flexneri</name>
    <dbReference type="NCBI Taxonomy" id="623"/>
    <lineage>
        <taxon>Bacteria</taxon>
        <taxon>Pseudomonadati</taxon>
        <taxon>Pseudomonadota</taxon>
        <taxon>Gammaproteobacteria</taxon>
        <taxon>Enterobacterales</taxon>
        <taxon>Enterobacteriaceae</taxon>
        <taxon>Shigella</taxon>
    </lineage>
</organism>
<sequence>MSVSRRVIHHGLYFAVLGPLIGVLFLVLYIFFAKEPLVLLVIIQVLPLFLLLSITTGAIPALLTGVMVACLPEKIGSQKNYRCLAGGIGGVVITEIYCAVIVHIKGMASSELFENILSGDSLVVRIIPALLAGVVMSRIITRLPGLDISCPETDSLS</sequence>